<feature type="chain" id="PRO_0000175520" description="Large ribosomal subunit protein bL17">
    <location>
        <begin position="1"/>
        <end position="142"/>
    </location>
</feature>
<dbReference type="EMBL" id="AE002160">
    <property type="protein sequence ID" value="AAF39596.1"/>
    <property type="molecule type" value="Genomic_DNA"/>
</dbReference>
<dbReference type="PIR" id="A81663">
    <property type="entry name" value="A81663"/>
</dbReference>
<dbReference type="RefSeq" id="WP_010231570.1">
    <property type="nucleotide sequence ID" value="NZ_CP063055.1"/>
</dbReference>
<dbReference type="SMR" id="Q9PJN5"/>
<dbReference type="GeneID" id="1246160"/>
<dbReference type="KEGG" id="cmu:TC_0793"/>
<dbReference type="eggNOG" id="COG0203">
    <property type="taxonomic scope" value="Bacteria"/>
</dbReference>
<dbReference type="HOGENOM" id="CLU_074407_2_0_0"/>
<dbReference type="OrthoDB" id="9809073at2"/>
<dbReference type="Proteomes" id="UP000000800">
    <property type="component" value="Chromosome"/>
</dbReference>
<dbReference type="GO" id="GO:0022625">
    <property type="term" value="C:cytosolic large ribosomal subunit"/>
    <property type="evidence" value="ECO:0007669"/>
    <property type="project" value="TreeGrafter"/>
</dbReference>
<dbReference type="GO" id="GO:0003735">
    <property type="term" value="F:structural constituent of ribosome"/>
    <property type="evidence" value="ECO:0007669"/>
    <property type="project" value="InterPro"/>
</dbReference>
<dbReference type="GO" id="GO:0006412">
    <property type="term" value="P:translation"/>
    <property type="evidence" value="ECO:0007669"/>
    <property type="project" value="UniProtKB-UniRule"/>
</dbReference>
<dbReference type="FunFam" id="3.90.1030.10:FF:000003">
    <property type="entry name" value="50S ribosomal protein L17"/>
    <property type="match status" value="1"/>
</dbReference>
<dbReference type="Gene3D" id="3.90.1030.10">
    <property type="entry name" value="Ribosomal protein L17"/>
    <property type="match status" value="1"/>
</dbReference>
<dbReference type="HAMAP" id="MF_01368">
    <property type="entry name" value="Ribosomal_bL17"/>
    <property type="match status" value="1"/>
</dbReference>
<dbReference type="InterPro" id="IPR000456">
    <property type="entry name" value="Ribosomal_bL17"/>
</dbReference>
<dbReference type="InterPro" id="IPR047859">
    <property type="entry name" value="Ribosomal_bL17_CS"/>
</dbReference>
<dbReference type="InterPro" id="IPR036373">
    <property type="entry name" value="Ribosomal_bL17_sf"/>
</dbReference>
<dbReference type="NCBIfam" id="TIGR00059">
    <property type="entry name" value="L17"/>
    <property type="match status" value="1"/>
</dbReference>
<dbReference type="PANTHER" id="PTHR14413:SF16">
    <property type="entry name" value="LARGE RIBOSOMAL SUBUNIT PROTEIN BL17M"/>
    <property type="match status" value="1"/>
</dbReference>
<dbReference type="PANTHER" id="PTHR14413">
    <property type="entry name" value="RIBOSOMAL PROTEIN L17"/>
    <property type="match status" value="1"/>
</dbReference>
<dbReference type="Pfam" id="PF01196">
    <property type="entry name" value="Ribosomal_L17"/>
    <property type="match status" value="1"/>
</dbReference>
<dbReference type="SUPFAM" id="SSF64263">
    <property type="entry name" value="Prokaryotic ribosomal protein L17"/>
    <property type="match status" value="1"/>
</dbReference>
<dbReference type="PROSITE" id="PS01167">
    <property type="entry name" value="RIBOSOMAL_L17"/>
    <property type="match status" value="1"/>
</dbReference>
<sequence>MQHARKKFRVGRTSSHNRCMLANMLKSLIHNERIETTLPKAKELRRHADKMVTLAKKNTLAARRLAVGRLMVRYNTLTGKEARQVKAGDLSAYNVDRRVIGKLFDVLATRFSSRNGGYTRILKLQNRVGDNAQKCIIEFLAD</sequence>
<protein>
    <recommendedName>
        <fullName evidence="1">Large ribosomal subunit protein bL17</fullName>
    </recommendedName>
    <alternativeName>
        <fullName evidence="2">50S ribosomal protein L17</fullName>
    </alternativeName>
</protein>
<evidence type="ECO:0000255" key="1">
    <source>
        <dbReference type="HAMAP-Rule" id="MF_01368"/>
    </source>
</evidence>
<evidence type="ECO:0000305" key="2"/>
<gene>
    <name evidence="1" type="primary">rplQ</name>
    <name type="ordered locus">TC_0793</name>
</gene>
<reference key="1">
    <citation type="journal article" date="2000" name="Nucleic Acids Res.">
        <title>Genome sequences of Chlamydia trachomatis MoPn and Chlamydia pneumoniae AR39.</title>
        <authorList>
            <person name="Read T.D."/>
            <person name="Brunham R.C."/>
            <person name="Shen C."/>
            <person name="Gill S.R."/>
            <person name="Heidelberg J.F."/>
            <person name="White O."/>
            <person name="Hickey E.K."/>
            <person name="Peterson J.D."/>
            <person name="Utterback T.R."/>
            <person name="Berry K.J."/>
            <person name="Bass S."/>
            <person name="Linher K.D."/>
            <person name="Weidman J.F."/>
            <person name="Khouri H.M."/>
            <person name="Craven B."/>
            <person name="Bowman C."/>
            <person name="Dodson R.J."/>
            <person name="Gwinn M.L."/>
            <person name="Nelson W.C."/>
            <person name="DeBoy R.T."/>
            <person name="Kolonay J.F."/>
            <person name="McClarty G."/>
            <person name="Salzberg S.L."/>
            <person name="Eisen J.A."/>
            <person name="Fraser C.M."/>
        </authorList>
    </citation>
    <scope>NUCLEOTIDE SEQUENCE [LARGE SCALE GENOMIC DNA]</scope>
    <source>
        <strain>MoPn / Nigg</strain>
    </source>
</reference>
<comment type="subunit">
    <text evidence="1">Part of the 50S ribosomal subunit. Contacts protein L32.</text>
</comment>
<comment type="similarity">
    <text evidence="1">Belongs to the bacterial ribosomal protein bL17 family.</text>
</comment>
<organism>
    <name type="scientific">Chlamydia muridarum (strain MoPn / Nigg)</name>
    <dbReference type="NCBI Taxonomy" id="243161"/>
    <lineage>
        <taxon>Bacteria</taxon>
        <taxon>Pseudomonadati</taxon>
        <taxon>Chlamydiota</taxon>
        <taxon>Chlamydiia</taxon>
        <taxon>Chlamydiales</taxon>
        <taxon>Chlamydiaceae</taxon>
        <taxon>Chlamydia/Chlamydophila group</taxon>
        <taxon>Chlamydia</taxon>
    </lineage>
</organism>
<accession>Q9PJN5</accession>
<name>RL17_CHLMU</name>
<proteinExistence type="inferred from homology"/>
<keyword id="KW-0687">Ribonucleoprotein</keyword>
<keyword id="KW-0689">Ribosomal protein</keyword>